<proteinExistence type="inferred from homology"/>
<comment type="function">
    <text evidence="1">Cell wall formation.</text>
</comment>
<comment type="catalytic activity">
    <reaction evidence="1">
        <text>UDP-N-acetyl-alpha-D-muramate + L-alanine + ATP = UDP-N-acetyl-alpha-D-muramoyl-L-alanine + ADP + phosphate + H(+)</text>
        <dbReference type="Rhea" id="RHEA:23372"/>
        <dbReference type="ChEBI" id="CHEBI:15378"/>
        <dbReference type="ChEBI" id="CHEBI:30616"/>
        <dbReference type="ChEBI" id="CHEBI:43474"/>
        <dbReference type="ChEBI" id="CHEBI:57972"/>
        <dbReference type="ChEBI" id="CHEBI:70757"/>
        <dbReference type="ChEBI" id="CHEBI:83898"/>
        <dbReference type="ChEBI" id="CHEBI:456216"/>
        <dbReference type="EC" id="6.3.2.8"/>
    </reaction>
</comment>
<comment type="pathway">
    <text evidence="1">Cell wall biogenesis; peptidoglycan biosynthesis.</text>
</comment>
<comment type="subcellular location">
    <subcellularLocation>
        <location evidence="1">Cytoplasm</location>
    </subcellularLocation>
</comment>
<comment type="similarity">
    <text evidence="1">Belongs to the MurCDEF family.</text>
</comment>
<organism>
    <name type="scientific">Coxiella burnetii (strain CbuG_Q212)</name>
    <name type="common">Coxiella burnetii (strain Q212)</name>
    <dbReference type="NCBI Taxonomy" id="434923"/>
    <lineage>
        <taxon>Bacteria</taxon>
        <taxon>Pseudomonadati</taxon>
        <taxon>Pseudomonadota</taxon>
        <taxon>Gammaproteobacteria</taxon>
        <taxon>Legionellales</taxon>
        <taxon>Coxiellaceae</taxon>
        <taxon>Coxiella</taxon>
    </lineage>
</organism>
<sequence length="465" mass="50666">MQLDKKIINHVHCLGIGGIGVSALAEILLKKGCRVTGSDVSPNKNTERLQRLGAEIIFNHDGTAITQADCAVYSSAIGATNPELMAAKQAKIPLLKRGEMLANLMKEYQSIAVAGAHGKTTTSGMLSHAFVEANLDPTFMVGGVLNNSQTPARVGNGHYFIAEADESDASFLFMHPDIAVVTNIDADHLSTYDGDFNRLKQTYIQFLEQTAQDGVVVLCLDDPILREIAPLLSRRVITYGFSSDAQYRVVDYCQQGIQSLFQIHSPQRKAPLTVKLSMPGQHNALNATAVTAIADVVQMNEPALLKSLADFPGVDRRFTIRGEMILPKGNALIIEDYGHHPNEIKATLAAARAAWPERRMVLVFQPHRYSRTRDLMTEFVSVLAETDWLVLLEVYSAGEMPIPGADGMALIKMMSNGMAQKTTFVPLLQNLPETLQKLSQPNDIIILQGAGNIGSIVTALVQTYG</sequence>
<protein>
    <recommendedName>
        <fullName evidence="1">UDP-N-acetylmuramate--L-alanine ligase</fullName>
        <ecNumber evidence="1">6.3.2.8</ecNumber>
    </recommendedName>
    <alternativeName>
        <fullName evidence="1">UDP-N-acetylmuramoyl-L-alanine synthetase</fullName>
    </alternativeName>
</protein>
<name>MURC_COXB2</name>
<feature type="chain" id="PRO_1000091095" description="UDP-N-acetylmuramate--L-alanine ligase">
    <location>
        <begin position="1"/>
        <end position="465"/>
    </location>
</feature>
<feature type="binding site" evidence="1">
    <location>
        <begin position="115"/>
        <end position="121"/>
    </location>
    <ligand>
        <name>ATP</name>
        <dbReference type="ChEBI" id="CHEBI:30616"/>
    </ligand>
</feature>
<gene>
    <name evidence="1" type="primary">murC</name>
    <name type="ordered locus">CbuG_1880</name>
</gene>
<dbReference type="EC" id="6.3.2.8" evidence="1"/>
<dbReference type="EMBL" id="CP001019">
    <property type="protein sequence ID" value="ACJ19129.1"/>
    <property type="molecule type" value="Genomic_DNA"/>
</dbReference>
<dbReference type="RefSeq" id="WP_012570462.1">
    <property type="nucleotide sequence ID" value="NC_011527.1"/>
</dbReference>
<dbReference type="SMR" id="B6J2Q2"/>
<dbReference type="KEGG" id="cbg:CbuG_1880"/>
<dbReference type="HOGENOM" id="CLU_028104_2_2_6"/>
<dbReference type="UniPathway" id="UPA00219"/>
<dbReference type="GO" id="GO:0005737">
    <property type="term" value="C:cytoplasm"/>
    <property type="evidence" value="ECO:0007669"/>
    <property type="project" value="UniProtKB-SubCell"/>
</dbReference>
<dbReference type="GO" id="GO:0005524">
    <property type="term" value="F:ATP binding"/>
    <property type="evidence" value="ECO:0007669"/>
    <property type="project" value="UniProtKB-UniRule"/>
</dbReference>
<dbReference type="GO" id="GO:0008763">
    <property type="term" value="F:UDP-N-acetylmuramate-L-alanine ligase activity"/>
    <property type="evidence" value="ECO:0007669"/>
    <property type="project" value="UniProtKB-UniRule"/>
</dbReference>
<dbReference type="GO" id="GO:0051301">
    <property type="term" value="P:cell division"/>
    <property type="evidence" value="ECO:0007669"/>
    <property type="project" value="UniProtKB-KW"/>
</dbReference>
<dbReference type="GO" id="GO:0071555">
    <property type="term" value="P:cell wall organization"/>
    <property type="evidence" value="ECO:0007669"/>
    <property type="project" value="UniProtKB-KW"/>
</dbReference>
<dbReference type="GO" id="GO:0009252">
    <property type="term" value="P:peptidoglycan biosynthetic process"/>
    <property type="evidence" value="ECO:0007669"/>
    <property type="project" value="UniProtKB-UniRule"/>
</dbReference>
<dbReference type="GO" id="GO:0008360">
    <property type="term" value="P:regulation of cell shape"/>
    <property type="evidence" value="ECO:0007669"/>
    <property type="project" value="UniProtKB-KW"/>
</dbReference>
<dbReference type="Gene3D" id="3.90.190.20">
    <property type="entry name" value="Mur ligase, C-terminal domain"/>
    <property type="match status" value="1"/>
</dbReference>
<dbReference type="Gene3D" id="3.40.1190.10">
    <property type="entry name" value="Mur-like, catalytic domain"/>
    <property type="match status" value="1"/>
</dbReference>
<dbReference type="Gene3D" id="3.40.50.720">
    <property type="entry name" value="NAD(P)-binding Rossmann-like Domain"/>
    <property type="match status" value="1"/>
</dbReference>
<dbReference type="HAMAP" id="MF_00046">
    <property type="entry name" value="MurC"/>
    <property type="match status" value="1"/>
</dbReference>
<dbReference type="InterPro" id="IPR036565">
    <property type="entry name" value="Mur-like_cat_sf"/>
</dbReference>
<dbReference type="InterPro" id="IPR004101">
    <property type="entry name" value="Mur_ligase_C"/>
</dbReference>
<dbReference type="InterPro" id="IPR036615">
    <property type="entry name" value="Mur_ligase_C_dom_sf"/>
</dbReference>
<dbReference type="InterPro" id="IPR013221">
    <property type="entry name" value="Mur_ligase_cen"/>
</dbReference>
<dbReference type="InterPro" id="IPR000713">
    <property type="entry name" value="Mur_ligase_N"/>
</dbReference>
<dbReference type="InterPro" id="IPR050061">
    <property type="entry name" value="MurCDEF_pg_biosynth"/>
</dbReference>
<dbReference type="InterPro" id="IPR005758">
    <property type="entry name" value="UDP-N-AcMur_Ala_ligase_MurC"/>
</dbReference>
<dbReference type="NCBIfam" id="TIGR01082">
    <property type="entry name" value="murC"/>
    <property type="match status" value="1"/>
</dbReference>
<dbReference type="PANTHER" id="PTHR43445:SF3">
    <property type="entry name" value="UDP-N-ACETYLMURAMATE--L-ALANINE LIGASE"/>
    <property type="match status" value="1"/>
</dbReference>
<dbReference type="PANTHER" id="PTHR43445">
    <property type="entry name" value="UDP-N-ACETYLMURAMATE--L-ALANINE LIGASE-RELATED"/>
    <property type="match status" value="1"/>
</dbReference>
<dbReference type="Pfam" id="PF01225">
    <property type="entry name" value="Mur_ligase"/>
    <property type="match status" value="1"/>
</dbReference>
<dbReference type="Pfam" id="PF02875">
    <property type="entry name" value="Mur_ligase_C"/>
    <property type="match status" value="1"/>
</dbReference>
<dbReference type="Pfam" id="PF08245">
    <property type="entry name" value="Mur_ligase_M"/>
    <property type="match status" value="1"/>
</dbReference>
<dbReference type="SUPFAM" id="SSF51984">
    <property type="entry name" value="MurCD N-terminal domain"/>
    <property type="match status" value="1"/>
</dbReference>
<dbReference type="SUPFAM" id="SSF53623">
    <property type="entry name" value="MurD-like peptide ligases, catalytic domain"/>
    <property type="match status" value="1"/>
</dbReference>
<dbReference type="SUPFAM" id="SSF53244">
    <property type="entry name" value="MurD-like peptide ligases, peptide-binding domain"/>
    <property type="match status" value="1"/>
</dbReference>
<keyword id="KW-0067">ATP-binding</keyword>
<keyword id="KW-0131">Cell cycle</keyword>
<keyword id="KW-0132">Cell division</keyword>
<keyword id="KW-0133">Cell shape</keyword>
<keyword id="KW-0961">Cell wall biogenesis/degradation</keyword>
<keyword id="KW-0963">Cytoplasm</keyword>
<keyword id="KW-0436">Ligase</keyword>
<keyword id="KW-0547">Nucleotide-binding</keyword>
<keyword id="KW-0573">Peptidoglycan synthesis</keyword>
<reference key="1">
    <citation type="journal article" date="2009" name="Infect. Immun.">
        <title>Comparative genomics reveal extensive transposon-mediated genomic plasticity and diversity among potential effector proteins within the genus Coxiella.</title>
        <authorList>
            <person name="Beare P.A."/>
            <person name="Unsworth N."/>
            <person name="Andoh M."/>
            <person name="Voth D.E."/>
            <person name="Omsland A."/>
            <person name="Gilk S.D."/>
            <person name="Williams K.P."/>
            <person name="Sobral B.W."/>
            <person name="Kupko J.J. III"/>
            <person name="Porcella S.F."/>
            <person name="Samuel J.E."/>
            <person name="Heinzen R.A."/>
        </authorList>
    </citation>
    <scope>NUCLEOTIDE SEQUENCE [LARGE SCALE GENOMIC DNA]</scope>
    <source>
        <strain>CbuG_Q212</strain>
    </source>
</reference>
<accession>B6J2Q2</accession>
<evidence type="ECO:0000255" key="1">
    <source>
        <dbReference type="HAMAP-Rule" id="MF_00046"/>
    </source>
</evidence>